<gene>
    <name type="primary">Sh2d4a</name>
</gene>
<proteinExistence type="evidence at transcript level"/>
<dbReference type="EMBL" id="BC079100">
    <property type="protein sequence ID" value="AAH79100.1"/>
    <property type="molecule type" value="mRNA"/>
</dbReference>
<dbReference type="RefSeq" id="NP_001012048.1">
    <property type="nucleotide sequence ID" value="NM_001012048.1"/>
</dbReference>
<dbReference type="RefSeq" id="XP_006253094.1">
    <property type="nucleotide sequence ID" value="XM_006253032.3"/>
</dbReference>
<dbReference type="RefSeq" id="XP_038950424.1">
    <property type="nucleotide sequence ID" value="XM_039094496.2"/>
</dbReference>
<dbReference type="SMR" id="Q6AYC8"/>
<dbReference type="BioGRID" id="258441">
    <property type="interactions" value="1"/>
</dbReference>
<dbReference type="FunCoup" id="Q6AYC8">
    <property type="interactions" value="68"/>
</dbReference>
<dbReference type="STRING" id="10116.ENSRNOP00000018543"/>
<dbReference type="iPTMnet" id="Q6AYC8"/>
<dbReference type="PhosphoSitePlus" id="Q6AYC8"/>
<dbReference type="PaxDb" id="10116-ENSRNOP00000018543"/>
<dbReference type="Ensembl" id="ENSRNOT00000018543.6">
    <property type="protein sequence ID" value="ENSRNOP00000018543.3"/>
    <property type="gene ID" value="ENSRNOG00000013541.6"/>
</dbReference>
<dbReference type="GeneID" id="306376"/>
<dbReference type="KEGG" id="rno:306376"/>
<dbReference type="UCSC" id="RGD:1307991">
    <property type="organism name" value="rat"/>
</dbReference>
<dbReference type="AGR" id="RGD:1307991"/>
<dbReference type="CTD" id="63898"/>
<dbReference type="RGD" id="1307991">
    <property type="gene designation" value="Sh2d4a"/>
</dbReference>
<dbReference type="eggNOG" id="ENOG502QVV5">
    <property type="taxonomic scope" value="Eukaryota"/>
</dbReference>
<dbReference type="GeneTree" id="ENSGT00940000157357"/>
<dbReference type="HOGENOM" id="CLU_029296_1_0_1"/>
<dbReference type="InParanoid" id="Q6AYC8"/>
<dbReference type="OMA" id="NRMKTYG"/>
<dbReference type="OrthoDB" id="10003345at2759"/>
<dbReference type="PhylomeDB" id="Q6AYC8"/>
<dbReference type="TreeFam" id="TF336893"/>
<dbReference type="PRO" id="PR:Q6AYC8"/>
<dbReference type="Proteomes" id="UP000002494">
    <property type="component" value="Chromosome 16"/>
</dbReference>
<dbReference type="Bgee" id="ENSRNOG00000013541">
    <property type="expression patterns" value="Expressed in stomach and 18 other cell types or tissues"/>
</dbReference>
<dbReference type="GO" id="GO:0005737">
    <property type="term" value="C:cytoplasm"/>
    <property type="evidence" value="ECO:0000250"/>
    <property type="project" value="UniProtKB"/>
</dbReference>
<dbReference type="GO" id="GO:0005829">
    <property type="term" value="C:cytosol"/>
    <property type="evidence" value="ECO:0007669"/>
    <property type="project" value="Ensembl"/>
</dbReference>
<dbReference type="GO" id="GO:0019902">
    <property type="term" value="F:phosphatase binding"/>
    <property type="evidence" value="ECO:0000250"/>
    <property type="project" value="UniProtKB"/>
</dbReference>
<dbReference type="CDD" id="cd10350">
    <property type="entry name" value="SH2_SH2D4A"/>
    <property type="match status" value="1"/>
</dbReference>
<dbReference type="FunFam" id="3.30.505.10:FF:000034">
    <property type="entry name" value="SH2 domain-containing protein 4A"/>
    <property type="match status" value="1"/>
</dbReference>
<dbReference type="Gene3D" id="3.30.505.10">
    <property type="entry name" value="SH2 domain"/>
    <property type="match status" value="1"/>
</dbReference>
<dbReference type="InterPro" id="IPR000980">
    <property type="entry name" value="SH2"/>
</dbReference>
<dbReference type="InterPro" id="IPR036860">
    <property type="entry name" value="SH2_dom_sf"/>
</dbReference>
<dbReference type="PANTHER" id="PTHR14388:SF5">
    <property type="entry name" value="SH2 DOMAIN-CONTAINING PROTEIN 4A"/>
    <property type="match status" value="1"/>
</dbReference>
<dbReference type="PANTHER" id="PTHR14388">
    <property type="entry name" value="T CELL-SPECIFIC ADAPTER PROTEIN TSAD"/>
    <property type="match status" value="1"/>
</dbReference>
<dbReference type="Pfam" id="PF00017">
    <property type="entry name" value="SH2"/>
    <property type="match status" value="1"/>
</dbReference>
<dbReference type="PRINTS" id="PR00401">
    <property type="entry name" value="SH2DOMAIN"/>
</dbReference>
<dbReference type="SMART" id="SM00252">
    <property type="entry name" value="SH2"/>
    <property type="match status" value="1"/>
</dbReference>
<dbReference type="SUPFAM" id="SSF55550">
    <property type="entry name" value="SH2 domain"/>
    <property type="match status" value="1"/>
</dbReference>
<dbReference type="PROSITE" id="PS50001">
    <property type="entry name" value="SH2"/>
    <property type="match status" value="1"/>
</dbReference>
<organism>
    <name type="scientific">Rattus norvegicus</name>
    <name type="common">Rat</name>
    <dbReference type="NCBI Taxonomy" id="10116"/>
    <lineage>
        <taxon>Eukaryota</taxon>
        <taxon>Metazoa</taxon>
        <taxon>Chordata</taxon>
        <taxon>Craniata</taxon>
        <taxon>Vertebrata</taxon>
        <taxon>Euteleostomi</taxon>
        <taxon>Mammalia</taxon>
        <taxon>Eutheria</taxon>
        <taxon>Euarchontoglires</taxon>
        <taxon>Glires</taxon>
        <taxon>Rodentia</taxon>
        <taxon>Myomorpha</taxon>
        <taxon>Muroidea</taxon>
        <taxon>Muridae</taxon>
        <taxon>Murinae</taxon>
        <taxon>Rattus</taxon>
    </lineage>
</organism>
<sequence length="422" mass="48522">MLRQILSEMFIDPDLLAELSEEQKQILFYKMREEQIRRWKEREAAMERKESLPVKSRPKKENGKSVHWKLGADKQVWVWVMGEHHLDKPYDVLCDEILAEREHLRAAKDAELRKAQSLQFTNSLKVKSLNCDLQAVKKTEPQNVTRKAAAEEATDQGPRAIPTKKDDKAQTKDLTKKKDSEELKQTEDEKTKQIYKNWKEDSEWQASLRKSKAADEKRRSLAKQAREDYKRLSQRGRSGDGLQNPLTGPQKPKRPPLPPKPQFLQPLGSPPKSLGNQGVIRTKTSSTQEDIIRWFKEEQLPFRAGYQKNSDTIAPWFHGILTLKKANELLSTGMPGSFLIRVSEKIKGYALSYLSEEGCKHFLIDASANSYSFLGVDQLQHATLADLVEYHKEEPITSLGKELLLFPCGQQDKPPDYLELFQ</sequence>
<feature type="chain" id="PRO_0000233135" description="SH2 domain-containing protein 4A">
    <location>
        <begin position="1"/>
        <end position="422"/>
    </location>
</feature>
<feature type="domain" description="SH2" evidence="4">
    <location>
        <begin position="316"/>
        <end position="408"/>
    </location>
</feature>
<feature type="region of interest" description="Disordered" evidence="5">
    <location>
        <begin position="141"/>
        <end position="190"/>
    </location>
</feature>
<feature type="region of interest" description="Disordered" evidence="5">
    <location>
        <begin position="202"/>
        <end position="282"/>
    </location>
</feature>
<feature type="compositionally biased region" description="Basic and acidic residues" evidence="5">
    <location>
        <begin position="163"/>
        <end position="190"/>
    </location>
</feature>
<feature type="compositionally biased region" description="Basic and acidic residues" evidence="5">
    <location>
        <begin position="212"/>
        <end position="231"/>
    </location>
</feature>
<feature type="modified residue" description="Phosphoserine" evidence="2">
    <location>
        <position position="117"/>
    </location>
</feature>
<feature type="modified residue" description="Phosphoserine" evidence="3">
    <location>
        <position position="123"/>
    </location>
</feature>
<feature type="modified residue" description="Phosphoserine" evidence="3">
    <location>
        <position position="233"/>
    </location>
</feature>
<evidence type="ECO:0000250" key="1"/>
<evidence type="ECO:0000250" key="2">
    <source>
        <dbReference type="UniProtKB" id="Q9D7V1"/>
    </source>
</evidence>
<evidence type="ECO:0000250" key="3">
    <source>
        <dbReference type="UniProtKB" id="Q9H788"/>
    </source>
</evidence>
<evidence type="ECO:0000255" key="4">
    <source>
        <dbReference type="PROSITE-ProRule" id="PRU00191"/>
    </source>
</evidence>
<evidence type="ECO:0000256" key="5">
    <source>
        <dbReference type="SAM" id="MobiDB-lite"/>
    </source>
</evidence>
<protein>
    <recommendedName>
        <fullName>SH2 domain-containing protein 4A</fullName>
    </recommendedName>
</protein>
<accession>Q6AYC8</accession>
<keyword id="KW-0963">Cytoplasm</keyword>
<keyword id="KW-0597">Phosphoprotein</keyword>
<keyword id="KW-1185">Reference proteome</keyword>
<keyword id="KW-0727">SH2 domain</keyword>
<comment type="function">
    <text evidence="1">Inhibits estrogen-induced cell proliferation by competing with PLCG for binding to ESR1, blocking the effect of estrogen on PLCG and repressing estrogen-induced proliferation. May play a role in T-cell development and function (By similarity).</text>
</comment>
<comment type="subunit">
    <text evidence="1">Interacts with ESR1.</text>
</comment>
<comment type="subcellular location">
    <subcellularLocation>
        <location evidence="1">Cytoplasm</location>
    </subcellularLocation>
    <text evidence="1">Located at podocyte foot processes.</text>
</comment>
<reference key="1">
    <citation type="journal article" date="2004" name="Genome Res.">
        <title>The status, quality, and expansion of the NIH full-length cDNA project: the Mammalian Gene Collection (MGC).</title>
        <authorList>
            <consortium name="The MGC Project Team"/>
        </authorList>
    </citation>
    <scope>NUCLEOTIDE SEQUENCE [LARGE SCALE MRNA]</scope>
    <source>
        <tissue>Lung</tissue>
    </source>
</reference>
<name>SH24A_RAT</name>